<feature type="chain" id="PRO_0000069425" description="Lysophosphatidic acid receptor 2">
    <location>
        <begin position="1"/>
        <end position="348"/>
    </location>
</feature>
<feature type="topological domain" description="Extracellular" evidence="3">
    <location>
        <begin position="1"/>
        <end position="30"/>
    </location>
</feature>
<feature type="transmembrane region" description="Helical; Name=1" evidence="3">
    <location>
        <begin position="31"/>
        <end position="51"/>
    </location>
</feature>
<feature type="topological domain" description="Cytoplasmic" evidence="3">
    <location>
        <begin position="52"/>
        <end position="66"/>
    </location>
</feature>
<feature type="transmembrane region" description="Helical; Name=2" evidence="3">
    <location>
        <begin position="67"/>
        <end position="87"/>
    </location>
</feature>
<feature type="topological domain" description="Extracellular" evidence="3">
    <location>
        <begin position="88"/>
        <end position="104"/>
    </location>
</feature>
<feature type="transmembrane region" description="Helical; Name=3" evidence="3">
    <location>
        <begin position="105"/>
        <end position="124"/>
    </location>
</feature>
<feature type="topological domain" description="Cytoplasmic" evidence="3">
    <location>
        <begin position="125"/>
        <end position="143"/>
    </location>
</feature>
<feature type="transmembrane region" description="Helical; Name=4" evidence="3">
    <location>
        <begin position="144"/>
        <end position="164"/>
    </location>
</feature>
<feature type="topological domain" description="Extracellular" evidence="3">
    <location>
        <begin position="165"/>
        <end position="185"/>
    </location>
</feature>
<feature type="transmembrane region" description="Helical; Name=5" evidence="3">
    <location>
        <begin position="186"/>
        <end position="206"/>
    </location>
</feature>
<feature type="topological domain" description="Cytoplasmic" evidence="3">
    <location>
        <begin position="207"/>
        <end position="239"/>
    </location>
</feature>
<feature type="transmembrane region" description="Helical; Name=6" evidence="3">
    <location>
        <begin position="240"/>
        <end position="260"/>
    </location>
</feature>
<feature type="topological domain" description="Extracellular" evidence="3">
    <location>
        <begin position="261"/>
        <end position="276"/>
    </location>
</feature>
<feature type="transmembrane region" description="Helical; Name=7" evidence="3">
    <location>
        <begin position="277"/>
        <end position="294"/>
    </location>
</feature>
<feature type="topological domain" description="Cytoplasmic" evidence="3">
    <location>
        <begin position="295"/>
        <end position="348"/>
    </location>
</feature>
<feature type="short sequence motif" description="PDZ-binding">
    <location>
        <begin position="345"/>
        <end position="348"/>
    </location>
</feature>
<feature type="lipid moiety-binding region" description="S-palmitoyl cysteine" evidence="1">
    <location>
        <position position="308"/>
    </location>
</feature>
<feature type="glycosylation site" description="N-linked (GlcNAc...) asparagine" evidence="3">
    <location>
        <position position="7"/>
    </location>
</feature>
<feature type="glycosylation site" description="N-linked (GlcNAc...) asparagine" evidence="3">
    <location>
        <position position="15"/>
    </location>
</feature>
<proteinExistence type="evidence at transcript level"/>
<organism>
    <name type="scientific">Macaca fascicularis</name>
    <name type="common">Crab-eating macaque</name>
    <name type="synonym">Cynomolgus monkey</name>
    <dbReference type="NCBI Taxonomy" id="9541"/>
    <lineage>
        <taxon>Eukaryota</taxon>
        <taxon>Metazoa</taxon>
        <taxon>Chordata</taxon>
        <taxon>Craniata</taxon>
        <taxon>Vertebrata</taxon>
        <taxon>Euteleostomi</taxon>
        <taxon>Mammalia</taxon>
        <taxon>Eutheria</taxon>
        <taxon>Euarchontoglires</taxon>
        <taxon>Primates</taxon>
        <taxon>Haplorrhini</taxon>
        <taxon>Catarrhini</taxon>
        <taxon>Cercopithecidae</taxon>
        <taxon>Cercopithecinae</taxon>
        <taxon>Macaca</taxon>
    </lineage>
</organism>
<accession>Q95KH4</accession>
<reference key="1">
    <citation type="submission" date="2001-04" db="EMBL/GenBank/DDBJ databases">
        <title>Isolation of full-length cDNA clones from macaque brain cDNA libraries.</title>
        <authorList>
            <person name="Osada N."/>
            <person name="Hida M."/>
            <person name="Kusuda J."/>
            <person name="Tanuma R."/>
            <person name="Iseki K."/>
            <person name="Hirai M."/>
            <person name="Terao K."/>
            <person name="Suzuki Y."/>
            <person name="Sugano S."/>
            <person name="Hashimoto K."/>
        </authorList>
    </citation>
    <scope>NUCLEOTIDE SEQUENCE [LARGE SCALE MRNA]</scope>
    <source>
        <tissue>Temporal cortex</tissue>
    </source>
</reference>
<comment type="function">
    <text evidence="1">Receptor for lysophosphatidic acid (LPA), a mediator of diverse cellular activities. Seems to be coupled to the G(i)/G(o), G(12)/G(13), and G(q) families of heteromeric G proteins. Plays a key role in phospholipase C-beta (PLC-beta) signaling pathway. Stimulates phospholipase C (PLC) activity in a manner that is independent of RALA activation (By similarity).</text>
</comment>
<comment type="subunit">
    <text evidence="1">Interacts with SLC9A3R2/NHERF2, MAGI3 and PLCB3. Interacts with RALA and GRK2 (By similarity).</text>
</comment>
<comment type="subcellular location">
    <subcellularLocation>
        <location evidence="1">Cell surface</location>
    </subcellularLocation>
    <subcellularLocation>
        <location evidence="5">Cell membrane</location>
        <topology evidence="5">Multi-pass membrane protein</topology>
    </subcellularLocation>
    <text evidence="1">Prior to LPA treatment found predominantly at the cell surface but in the presence of LPA colocalizes with RALA in the endocytic vesicles.</text>
</comment>
<comment type="similarity">
    <text evidence="4">Belongs to the G-protein coupled receptor 1 family.</text>
</comment>
<comment type="sequence caution" evidence="5">
    <conflict type="erroneous initiation">
        <sequence resource="EMBL-CDS" id="BAB46883"/>
    </conflict>
    <text>Extended N-terminus.</text>
</comment>
<protein>
    <recommendedName>
        <fullName evidence="2">Lysophosphatidic acid receptor 2</fullName>
        <shortName>LPA receptor 2</shortName>
        <shortName>LPA-2</shortName>
    </recommendedName>
    <alternativeName>
        <fullName>Lysophosphatidic acid receptor Edg-4</fullName>
    </alternativeName>
</protein>
<sequence>MGHCYYNETIGFFYNNSGKELSSHWRPKDVVVVALGLTVSVLVLLTNLLVIAAIASNRRFHQPIYYLLGNLAAADLFAGVAYLFLMFHTGPRTARLSLEGWFLRQGLLDTSLTASVATLLAIAVERRRSVMAVQLHSRLPRGRVVMLIVGVWVAALGLGLLPAHSWHCLCALDRCSRMAPLLSRSYLAVWALSSLLVFLLMVAVYTRIFFYVRRRVQRMAEHVSCHPRYRETTLSLVKTVVIILGAFVVCWTPGQVVLLLDGLGCKSCNVLAVEKYFLLLAEANSLVNAAVYSCRDAEMRRTFRRLLCCACLRRSTRESAHYTSSAQGGASTRIMLPENGHPLMDSTL</sequence>
<evidence type="ECO:0000250" key="1"/>
<evidence type="ECO:0000250" key="2">
    <source>
        <dbReference type="UniProtKB" id="Q9HBW0"/>
    </source>
</evidence>
<evidence type="ECO:0000255" key="3"/>
<evidence type="ECO:0000255" key="4">
    <source>
        <dbReference type="PROSITE-ProRule" id="PRU00521"/>
    </source>
</evidence>
<evidence type="ECO:0000305" key="5"/>
<dbReference type="EMBL" id="AB060872">
    <property type="protein sequence ID" value="BAB46883.1"/>
    <property type="status" value="ALT_INIT"/>
    <property type="molecule type" value="mRNA"/>
</dbReference>
<dbReference type="RefSeq" id="NP_001306445.1">
    <property type="nucleotide sequence ID" value="NM_001319516.1"/>
</dbReference>
<dbReference type="SMR" id="Q95KH4"/>
<dbReference type="STRING" id="9541.ENSMFAP00000003070"/>
<dbReference type="GlyCosmos" id="Q95KH4">
    <property type="glycosylation" value="2 sites, No reported glycans"/>
</dbReference>
<dbReference type="eggNOG" id="KOG3656">
    <property type="taxonomic scope" value="Eukaryota"/>
</dbReference>
<dbReference type="Proteomes" id="UP000233100">
    <property type="component" value="Unplaced"/>
</dbReference>
<dbReference type="GO" id="GO:0009986">
    <property type="term" value="C:cell surface"/>
    <property type="evidence" value="ECO:0000250"/>
    <property type="project" value="UniProtKB"/>
</dbReference>
<dbReference type="GO" id="GO:0005886">
    <property type="term" value="C:plasma membrane"/>
    <property type="evidence" value="ECO:0007669"/>
    <property type="project" value="UniProtKB-SubCell"/>
</dbReference>
<dbReference type="GO" id="GO:0070915">
    <property type="term" value="F:lysophosphatidic acid receptor activity"/>
    <property type="evidence" value="ECO:0007669"/>
    <property type="project" value="InterPro"/>
</dbReference>
<dbReference type="FunFam" id="1.20.1070.10:FF:000025">
    <property type="entry name" value="Lysophosphatidic acid receptor 1"/>
    <property type="match status" value="1"/>
</dbReference>
<dbReference type="Gene3D" id="1.20.1070.10">
    <property type="entry name" value="Rhodopsin 7-helix transmembrane proteins"/>
    <property type="match status" value="1"/>
</dbReference>
<dbReference type="InterPro" id="IPR000276">
    <property type="entry name" value="GPCR_Rhodpsn"/>
</dbReference>
<dbReference type="InterPro" id="IPR017452">
    <property type="entry name" value="GPCR_Rhodpsn_7TM"/>
</dbReference>
<dbReference type="InterPro" id="IPR004065">
    <property type="entry name" value="LPA_rcpt"/>
</dbReference>
<dbReference type="InterPro" id="IPR004066">
    <property type="entry name" value="LPA_rcpt_EDG4"/>
</dbReference>
<dbReference type="PANTHER" id="PTHR22750">
    <property type="entry name" value="G-PROTEIN COUPLED RECEPTOR"/>
    <property type="match status" value="1"/>
</dbReference>
<dbReference type="Pfam" id="PF00001">
    <property type="entry name" value="7tm_1"/>
    <property type="match status" value="1"/>
</dbReference>
<dbReference type="PRINTS" id="PR01528">
    <property type="entry name" value="EDG4RECEPTOR"/>
</dbReference>
<dbReference type="PRINTS" id="PR00237">
    <property type="entry name" value="GPCRRHODOPSN"/>
</dbReference>
<dbReference type="PRINTS" id="PR01527">
    <property type="entry name" value="LPARECEPTOR"/>
</dbReference>
<dbReference type="SMART" id="SM01381">
    <property type="entry name" value="7TM_GPCR_Srsx"/>
    <property type="match status" value="1"/>
</dbReference>
<dbReference type="SUPFAM" id="SSF81321">
    <property type="entry name" value="Family A G protein-coupled receptor-like"/>
    <property type="match status" value="1"/>
</dbReference>
<dbReference type="PROSITE" id="PS50262">
    <property type="entry name" value="G_PROTEIN_RECEP_F1_2"/>
    <property type="match status" value="1"/>
</dbReference>
<gene>
    <name evidence="2" type="primary">LPAR2</name>
    <name type="synonym">EDG4</name>
    <name type="synonym">LPA2</name>
    <name type="ORF">QtrA-12246</name>
</gene>
<name>LPAR2_MACFA</name>
<keyword id="KW-1003">Cell membrane</keyword>
<keyword id="KW-0297">G-protein coupled receptor</keyword>
<keyword id="KW-0325">Glycoprotein</keyword>
<keyword id="KW-0449">Lipoprotein</keyword>
<keyword id="KW-0472">Membrane</keyword>
<keyword id="KW-0564">Palmitate</keyword>
<keyword id="KW-0675">Receptor</keyword>
<keyword id="KW-1185">Reference proteome</keyword>
<keyword id="KW-0807">Transducer</keyword>
<keyword id="KW-0812">Transmembrane</keyword>
<keyword id="KW-1133">Transmembrane helix</keyword>